<feature type="chain" id="PRO_1000009047" description="Phosphoheptose isomerase">
    <location>
        <begin position="1"/>
        <end position="192"/>
    </location>
</feature>
<feature type="domain" description="SIS" evidence="1">
    <location>
        <begin position="37"/>
        <end position="192"/>
    </location>
</feature>
<feature type="binding site" evidence="1">
    <location>
        <begin position="52"/>
        <end position="54"/>
    </location>
    <ligand>
        <name>substrate</name>
    </ligand>
</feature>
<feature type="binding site" evidence="1">
    <location>
        <position position="61"/>
    </location>
    <ligand>
        <name>Zn(2+)</name>
        <dbReference type="ChEBI" id="CHEBI:29105"/>
    </ligand>
</feature>
<feature type="binding site" evidence="1">
    <location>
        <position position="65"/>
    </location>
    <ligand>
        <name>substrate</name>
    </ligand>
</feature>
<feature type="binding site" evidence="1">
    <location>
        <position position="65"/>
    </location>
    <ligand>
        <name>Zn(2+)</name>
        <dbReference type="ChEBI" id="CHEBI:29105"/>
    </ligand>
</feature>
<feature type="binding site" evidence="1">
    <location>
        <begin position="93"/>
        <end position="94"/>
    </location>
    <ligand>
        <name>substrate</name>
    </ligand>
</feature>
<feature type="binding site" evidence="1">
    <location>
        <begin position="119"/>
        <end position="121"/>
    </location>
    <ligand>
        <name>substrate</name>
    </ligand>
</feature>
<feature type="binding site" evidence="1">
    <location>
        <position position="124"/>
    </location>
    <ligand>
        <name>substrate</name>
    </ligand>
</feature>
<feature type="binding site" evidence="1">
    <location>
        <position position="172"/>
    </location>
    <ligand>
        <name>substrate</name>
    </ligand>
</feature>
<feature type="binding site" evidence="1">
    <location>
        <position position="172"/>
    </location>
    <ligand>
        <name>Zn(2+)</name>
        <dbReference type="ChEBI" id="CHEBI:29105"/>
    </ligand>
</feature>
<feature type="binding site" evidence="1">
    <location>
        <position position="180"/>
    </location>
    <ligand>
        <name>Zn(2+)</name>
        <dbReference type="ChEBI" id="CHEBI:29105"/>
    </ligand>
</feature>
<accession>A0KIK9</accession>
<reference key="1">
    <citation type="journal article" date="2006" name="J. Bacteriol.">
        <title>Genome sequence of Aeromonas hydrophila ATCC 7966T: jack of all trades.</title>
        <authorList>
            <person name="Seshadri R."/>
            <person name="Joseph S.W."/>
            <person name="Chopra A.K."/>
            <person name="Sha J."/>
            <person name="Shaw J."/>
            <person name="Graf J."/>
            <person name="Haft D.H."/>
            <person name="Wu M."/>
            <person name="Ren Q."/>
            <person name="Rosovitz M.J."/>
            <person name="Madupu R."/>
            <person name="Tallon L."/>
            <person name="Kim M."/>
            <person name="Jin S."/>
            <person name="Vuong H."/>
            <person name="Stine O.C."/>
            <person name="Ali A."/>
            <person name="Horneman A.J."/>
            <person name="Heidelberg J.F."/>
        </authorList>
    </citation>
    <scope>NUCLEOTIDE SEQUENCE [LARGE SCALE GENOMIC DNA]</scope>
    <source>
        <strain>ATCC 7966 / DSM 30187 / BCRC 13018 / CCUG 14551 / JCM 1027 / KCTC 2358 / NCIMB 9240 / NCTC 8049</strain>
    </source>
</reference>
<gene>
    <name evidence="1" type="primary">gmhA</name>
    <name type="ordered locus">AHA_1574</name>
</gene>
<comment type="function">
    <text evidence="1">Catalyzes the isomerization of sedoheptulose 7-phosphate in D-glycero-D-manno-heptose 7-phosphate.</text>
</comment>
<comment type="catalytic activity">
    <reaction evidence="1">
        <text>2 D-sedoheptulose 7-phosphate = D-glycero-alpha-D-manno-heptose 7-phosphate + D-glycero-beta-D-manno-heptose 7-phosphate</text>
        <dbReference type="Rhea" id="RHEA:27489"/>
        <dbReference type="ChEBI" id="CHEBI:57483"/>
        <dbReference type="ChEBI" id="CHEBI:60203"/>
        <dbReference type="ChEBI" id="CHEBI:60204"/>
        <dbReference type="EC" id="5.3.1.28"/>
    </reaction>
</comment>
<comment type="cofactor">
    <cofactor evidence="1">
        <name>Zn(2+)</name>
        <dbReference type="ChEBI" id="CHEBI:29105"/>
    </cofactor>
    <text evidence="1">Binds 1 zinc ion per subunit.</text>
</comment>
<comment type="pathway">
    <text evidence="1">Carbohydrate biosynthesis; D-glycero-D-manno-heptose 7-phosphate biosynthesis; D-glycero-alpha-D-manno-heptose 7-phosphate and D-glycero-beta-D-manno-heptose 7-phosphate from sedoheptulose 7-phosphate: step 1/1.</text>
</comment>
<comment type="subunit">
    <text evidence="1">Homotetramer.</text>
</comment>
<comment type="subcellular location">
    <subcellularLocation>
        <location evidence="1">Cytoplasm</location>
    </subcellularLocation>
</comment>
<comment type="miscellaneous">
    <text evidence="1">The reaction produces a racemic mixture of D-glycero-alpha-D-manno-heptose 7-phosphate and D-glycero-beta-D-manno-heptose 7-phosphate.</text>
</comment>
<comment type="similarity">
    <text evidence="1">Belongs to the SIS family. GmhA subfamily.</text>
</comment>
<dbReference type="EC" id="5.3.1.28" evidence="1"/>
<dbReference type="EMBL" id="CP000462">
    <property type="protein sequence ID" value="ABK36369.1"/>
    <property type="molecule type" value="Genomic_DNA"/>
</dbReference>
<dbReference type="RefSeq" id="YP_856110.1">
    <property type="nucleotide sequence ID" value="NC_008570.1"/>
</dbReference>
<dbReference type="SMR" id="A0KIK9"/>
<dbReference type="STRING" id="380703.AHA_1574"/>
<dbReference type="EnsemblBacteria" id="ABK36369">
    <property type="protein sequence ID" value="ABK36369"/>
    <property type="gene ID" value="AHA_1574"/>
</dbReference>
<dbReference type="GeneID" id="4487049"/>
<dbReference type="KEGG" id="aha:AHA_1574"/>
<dbReference type="PATRIC" id="fig|380703.7.peg.1585"/>
<dbReference type="eggNOG" id="COG0279">
    <property type="taxonomic scope" value="Bacteria"/>
</dbReference>
<dbReference type="HOGENOM" id="CLU_080999_4_0_6"/>
<dbReference type="OrthoDB" id="9810929at2"/>
<dbReference type="UniPathway" id="UPA00041">
    <property type="reaction ID" value="UER00436"/>
</dbReference>
<dbReference type="Proteomes" id="UP000000756">
    <property type="component" value="Chromosome"/>
</dbReference>
<dbReference type="GO" id="GO:0005737">
    <property type="term" value="C:cytoplasm"/>
    <property type="evidence" value="ECO:0007669"/>
    <property type="project" value="UniProtKB-SubCell"/>
</dbReference>
<dbReference type="GO" id="GO:0097367">
    <property type="term" value="F:carbohydrate derivative binding"/>
    <property type="evidence" value="ECO:0007669"/>
    <property type="project" value="InterPro"/>
</dbReference>
<dbReference type="GO" id="GO:0008968">
    <property type="term" value="F:D-sedoheptulose 7-phosphate isomerase activity"/>
    <property type="evidence" value="ECO:0007669"/>
    <property type="project" value="UniProtKB-UniRule"/>
</dbReference>
<dbReference type="GO" id="GO:0008270">
    <property type="term" value="F:zinc ion binding"/>
    <property type="evidence" value="ECO:0007669"/>
    <property type="project" value="UniProtKB-UniRule"/>
</dbReference>
<dbReference type="GO" id="GO:0005975">
    <property type="term" value="P:carbohydrate metabolic process"/>
    <property type="evidence" value="ECO:0007669"/>
    <property type="project" value="UniProtKB-UniRule"/>
</dbReference>
<dbReference type="GO" id="GO:2001061">
    <property type="term" value="P:D-glycero-D-manno-heptose 7-phosphate biosynthetic process"/>
    <property type="evidence" value="ECO:0007669"/>
    <property type="project" value="UniProtKB-UniPathway"/>
</dbReference>
<dbReference type="CDD" id="cd05006">
    <property type="entry name" value="SIS_GmhA"/>
    <property type="match status" value="1"/>
</dbReference>
<dbReference type="FunFam" id="3.40.50.10490:FF:000013">
    <property type="entry name" value="Phosphoheptose isomerase"/>
    <property type="match status" value="1"/>
</dbReference>
<dbReference type="Gene3D" id="3.40.50.10490">
    <property type="entry name" value="Glucose-6-phosphate isomerase like protein, domain 1"/>
    <property type="match status" value="1"/>
</dbReference>
<dbReference type="HAMAP" id="MF_00067">
    <property type="entry name" value="GmhA"/>
    <property type="match status" value="1"/>
</dbReference>
<dbReference type="InterPro" id="IPR035461">
    <property type="entry name" value="GmhA/DiaA"/>
</dbReference>
<dbReference type="InterPro" id="IPR004515">
    <property type="entry name" value="Phosphoheptose_Isoase"/>
</dbReference>
<dbReference type="InterPro" id="IPR001347">
    <property type="entry name" value="SIS_dom"/>
</dbReference>
<dbReference type="InterPro" id="IPR046348">
    <property type="entry name" value="SIS_dom_sf"/>
</dbReference>
<dbReference type="InterPro" id="IPR050099">
    <property type="entry name" value="SIS_GmhA/DiaA_subfam"/>
</dbReference>
<dbReference type="NCBIfam" id="TIGR00441">
    <property type="entry name" value="gmhA"/>
    <property type="match status" value="1"/>
</dbReference>
<dbReference type="NCBIfam" id="NF001628">
    <property type="entry name" value="PRK00414.1"/>
    <property type="match status" value="1"/>
</dbReference>
<dbReference type="PANTHER" id="PTHR30390:SF7">
    <property type="entry name" value="PHOSPHOHEPTOSE ISOMERASE"/>
    <property type="match status" value="1"/>
</dbReference>
<dbReference type="PANTHER" id="PTHR30390">
    <property type="entry name" value="SEDOHEPTULOSE 7-PHOSPHATE ISOMERASE / DNAA INITIATOR-ASSOCIATING FACTOR FOR REPLICATION INITIATION"/>
    <property type="match status" value="1"/>
</dbReference>
<dbReference type="Pfam" id="PF13580">
    <property type="entry name" value="SIS_2"/>
    <property type="match status" value="1"/>
</dbReference>
<dbReference type="SUPFAM" id="SSF53697">
    <property type="entry name" value="SIS domain"/>
    <property type="match status" value="1"/>
</dbReference>
<dbReference type="PROSITE" id="PS51464">
    <property type="entry name" value="SIS"/>
    <property type="match status" value="1"/>
</dbReference>
<keyword id="KW-0119">Carbohydrate metabolism</keyword>
<keyword id="KW-0963">Cytoplasm</keyword>
<keyword id="KW-0413">Isomerase</keyword>
<keyword id="KW-0479">Metal-binding</keyword>
<keyword id="KW-1185">Reference proteome</keyword>
<keyword id="KW-0862">Zinc</keyword>
<name>GMHA_AERHH</name>
<sequence>MYQELIRNELTEAASVLQAFLADEQNLKDIEAAAKLLADSFKQEGKVLSCGNGGSHCDAMHFAEELTGRYRENRPGYAGIAISDPSHLSCVSNDFGYDYVFSRYVEAVGRRGDVLLGISTSGNSGNILKAIEAAHAKGMKVIALTGKDGGKMAGLADVEIRVPHFGYADRIQEVHIKVIHILIQLVEKEMAK</sequence>
<protein>
    <recommendedName>
        <fullName evidence="1">Phosphoheptose isomerase</fullName>
        <ecNumber evidence="1">5.3.1.28</ecNumber>
    </recommendedName>
    <alternativeName>
        <fullName evidence="1">Sedoheptulose 7-phosphate isomerase</fullName>
    </alternativeName>
</protein>
<evidence type="ECO:0000255" key="1">
    <source>
        <dbReference type="HAMAP-Rule" id="MF_00067"/>
    </source>
</evidence>
<organism>
    <name type="scientific">Aeromonas hydrophila subsp. hydrophila (strain ATCC 7966 / DSM 30187 / BCRC 13018 / CCUG 14551 / JCM 1027 / KCTC 2358 / NCIMB 9240 / NCTC 8049)</name>
    <dbReference type="NCBI Taxonomy" id="380703"/>
    <lineage>
        <taxon>Bacteria</taxon>
        <taxon>Pseudomonadati</taxon>
        <taxon>Pseudomonadota</taxon>
        <taxon>Gammaproteobacteria</taxon>
        <taxon>Aeromonadales</taxon>
        <taxon>Aeromonadaceae</taxon>
        <taxon>Aeromonas</taxon>
    </lineage>
</organism>
<proteinExistence type="inferred from homology"/>